<comment type="function">
    <text evidence="1">RuBisCO catalyzes two reactions: the carboxylation of D-ribulose 1,5-bisphosphate, the primary event in carbon dioxide fixation, as well as the oxidative fragmentation of the pentose substrate. Both reactions occur simultaneously and in competition at the same active site (By similarity).</text>
</comment>
<comment type="catalytic activity">
    <reaction>
        <text>2 (2R)-3-phosphoglycerate + 2 H(+) = D-ribulose 1,5-bisphosphate + CO2 + H2O</text>
        <dbReference type="Rhea" id="RHEA:23124"/>
        <dbReference type="ChEBI" id="CHEBI:15377"/>
        <dbReference type="ChEBI" id="CHEBI:15378"/>
        <dbReference type="ChEBI" id="CHEBI:16526"/>
        <dbReference type="ChEBI" id="CHEBI:57870"/>
        <dbReference type="ChEBI" id="CHEBI:58272"/>
        <dbReference type="EC" id="4.1.1.39"/>
    </reaction>
</comment>
<comment type="catalytic activity">
    <reaction>
        <text>D-ribulose 1,5-bisphosphate + O2 = 2-phosphoglycolate + (2R)-3-phosphoglycerate + 2 H(+)</text>
        <dbReference type="Rhea" id="RHEA:36631"/>
        <dbReference type="ChEBI" id="CHEBI:15378"/>
        <dbReference type="ChEBI" id="CHEBI:15379"/>
        <dbReference type="ChEBI" id="CHEBI:57870"/>
        <dbReference type="ChEBI" id="CHEBI:58033"/>
        <dbReference type="ChEBI" id="CHEBI:58272"/>
    </reaction>
</comment>
<comment type="cofactor">
    <cofactor evidence="1">
        <name>Mg(2+)</name>
        <dbReference type="ChEBI" id="CHEBI:18420"/>
    </cofactor>
    <text evidence="1">Binds 1 Mg(2+) ion per subunit.</text>
</comment>
<comment type="subunit">
    <text evidence="1">Homodimer.</text>
</comment>
<comment type="miscellaneous">
    <text evidence="1">The basic functional RuBisCO is composed of a large chain homodimer in a 'head-to-tail' conformation. In contrast to form I RuBisCO, the form II RuBisCO are composed solely of large subunits (By similarity).</text>
</comment>
<comment type="similarity">
    <text evidence="2">Belongs to the RuBisCO large chain family. Type II subfamily.</text>
</comment>
<protein>
    <recommendedName>
        <fullName>Ribulose bisphosphate carboxylase</fullName>
        <shortName>RuBisCO</shortName>
        <ecNumber>4.1.1.39</ecNumber>
    </recommendedName>
</protein>
<reference key="1">
    <citation type="journal article" date="2010" name="J. Bacteriol.">
        <title>Complete genome sequence of the photosynthetic purple nonsulfur bacterium Rhodobacter capsulatus SB 1003.</title>
        <authorList>
            <person name="Strnad H."/>
            <person name="Lapidus A."/>
            <person name="Paces J."/>
            <person name="Ulbrich P."/>
            <person name="Vlcek C."/>
            <person name="Paces V."/>
            <person name="Haselkorn R."/>
        </authorList>
    </citation>
    <scope>NUCLEOTIDE SEQUENCE [LARGE SCALE GENOMIC DNA]</scope>
    <source>
        <strain>ATCC BAA-309 / NBRC 16581 / SB1003</strain>
    </source>
</reference>
<reference key="2">
    <citation type="journal article" date="1995" name="Arch. Microbiol.">
        <title>Expression of the cbbLcbbS and cbbM genes and distinct organization of the cbb Calvin cycle structural genes of Rhodobacter capsulatus.</title>
        <authorList>
            <person name="Paoli G.C."/>
            <person name="Morgan N.S."/>
            <person name="Tabita F.R."/>
            <person name="Shively J.M."/>
        </authorList>
    </citation>
    <scope>OPERON ORGANIZATION</scope>
    <scope>EXPRESSION IN R.SPHAEROIDES</scope>
    <source>
        <strain>ATCC BAA-309 / NBRC 16581 / SB1003</strain>
    </source>
</reference>
<organism>
    <name type="scientific">Rhodobacter capsulatus (strain ATCC BAA-309 / NBRC 16581 / SB1003)</name>
    <dbReference type="NCBI Taxonomy" id="272942"/>
    <lineage>
        <taxon>Bacteria</taxon>
        <taxon>Pseudomonadati</taxon>
        <taxon>Pseudomonadota</taxon>
        <taxon>Alphaproteobacteria</taxon>
        <taxon>Rhodobacterales</taxon>
        <taxon>Rhodobacter group</taxon>
        <taxon>Rhodobacter</taxon>
    </lineage>
</organism>
<sequence>MDQSNRYARLDLKEADLIAGGRHVLCAYVMKPKAGYGYLETAAHFAAESSTGTNVEVSTTDDFTRGVDALVYEIDPEKEIMKIAYPVELFDRNIIDGRAMLCSFLTLTIGNNQGMGDVEYAKMHEFYVPPCYLRLFDGPSMNIADMWRVLGRPVVDGGMVVGTIIKPKLGLRPKPFADACYEFWLGGDFIKNDEPQGNQTFAPLKETIRLVADAMKRAQDETGEAKLFSANITADDHYEMVARGEYILETFGENADHVAFLVDGYVTGPAAITTARRQFPRQFLHYHRAGHGAVTSPQSMRGYTAFVLSKMSRLQGASGIHTGTMGYGKMEGDASDKIMAYMLTDEAAQGPFYHQDWLGMKATTPIISGGMNALRLPGFFDNLGHSNVIQTSGGGAFGHLDGGTAGAKSLRQSCDAWKAGVDLVTYAKSHRELARAFESFPNDADKLYPGWRVALGVN</sequence>
<proteinExistence type="inferred from homology"/>
<gene>
    <name type="primary">cbbM</name>
    <name type="ordered locus">RCAP_rcc01829</name>
</gene>
<evidence type="ECO:0000250" key="1"/>
<evidence type="ECO:0000305" key="2"/>
<dbReference type="EC" id="4.1.1.39"/>
<dbReference type="EMBL" id="CP001312">
    <property type="protein sequence ID" value="ADE85574.1"/>
    <property type="molecule type" value="Genomic_DNA"/>
</dbReference>
<dbReference type="RefSeq" id="WP_013067553.1">
    <property type="nucleotide sequence ID" value="NC_014034.1"/>
</dbReference>
<dbReference type="SMR" id="D5AUD5"/>
<dbReference type="STRING" id="272942.RCAP_rcc01829"/>
<dbReference type="GeneID" id="31490704"/>
<dbReference type="KEGG" id="rcp:RCAP_rcc01829"/>
<dbReference type="eggNOG" id="COG1850">
    <property type="taxonomic scope" value="Bacteria"/>
</dbReference>
<dbReference type="HOGENOM" id="CLU_031450_3_1_5"/>
<dbReference type="OrthoDB" id="9764279at2"/>
<dbReference type="Proteomes" id="UP000002361">
    <property type="component" value="Chromosome"/>
</dbReference>
<dbReference type="GO" id="GO:0000287">
    <property type="term" value="F:magnesium ion binding"/>
    <property type="evidence" value="ECO:0007669"/>
    <property type="project" value="UniProtKB-UniRule"/>
</dbReference>
<dbReference type="GO" id="GO:0004497">
    <property type="term" value="F:monooxygenase activity"/>
    <property type="evidence" value="ECO:0007669"/>
    <property type="project" value="UniProtKB-KW"/>
</dbReference>
<dbReference type="GO" id="GO:0016984">
    <property type="term" value="F:ribulose-bisphosphate carboxylase activity"/>
    <property type="evidence" value="ECO:0007669"/>
    <property type="project" value="UniProtKB-UniRule"/>
</dbReference>
<dbReference type="GO" id="GO:0019253">
    <property type="term" value="P:reductive pentose-phosphate cycle"/>
    <property type="evidence" value="ECO:0007669"/>
    <property type="project" value="UniProtKB-KW"/>
</dbReference>
<dbReference type="CDD" id="cd08211">
    <property type="entry name" value="RuBisCO_large_II"/>
    <property type="match status" value="1"/>
</dbReference>
<dbReference type="Gene3D" id="3.20.20.110">
    <property type="entry name" value="Ribulose bisphosphate carboxylase, large subunit, C-terminal domain"/>
    <property type="match status" value="1"/>
</dbReference>
<dbReference type="Gene3D" id="3.30.70.150">
    <property type="entry name" value="RuBisCO large subunit, N-terminal domain"/>
    <property type="match status" value="1"/>
</dbReference>
<dbReference type="HAMAP" id="MF_01339">
    <property type="entry name" value="RuBisCO_L_type2"/>
    <property type="match status" value="1"/>
</dbReference>
<dbReference type="InterPro" id="IPR033966">
    <property type="entry name" value="RuBisCO"/>
</dbReference>
<dbReference type="InterPro" id="IPR020878">
    <property type="entry name" value="RuBisCo_large_chain_AS"/>
</dbReference>
<dbReference type="InterPro" id="IPR000685">
    <property type="entry name" value="RuBisCO_lsu_C"/>
</dbReference>
<dbReference type="InterPro" id="IPR036376">
    <property type="entry name" value="RuBisCO_lsu_C_sf"/>
</dbReference>
<dbReference type="InterPro" id="IPR017443">
    <property type="entry name" value="RuBisCO_lsu_fd_N"/>
</dbReference>
<dbReference type="InterPro" id="IPR036422">
    <property type="entry name" value="RuBisCO_lsu_N_sf"/>
</dbReference>
<dbReference type="InterPro" id="IPR020871">
    <property type="entry name" value="RuBisCO_lsuII"/>
</dbReference>
<dbReference type="NCBIfam" id="NF010002">
    <property type="entry name" value="PRK13475.1"/>
    <property type="match status" value="1"/>
</dbReference>
<dbReference type="PANTHER" id="PTHR42704">
    <property type="entry name" value="RIBULOSE BISPHOSPHATE CARBOXYLASE"/>
    <property type="match status" value="1"/>
</dbReference>
<dbReference type="PANTHER" id="PTHR42704:SF17">
    <property type="entry name" value="RIBULOSE BISPHOSPHATE CARBOXYLASE LARGE CHAIN"/>
    <property type="match status" value="1"/>
</dbReference>
<dbReference type="Pfam" id="PF00016">
    <property type="entry name" value="RuBisCO_large"/>
    <property type="match status" value="1"/>
</dbReference>
<dbReference type="Pfam" id="PF02788">
    <property type="entry name" value="RuBisCO_large_N"/>
    <property type="match status" value="1"/>
</dbReference>
<dbReference type="SFLD" id="SFLDS00014">
    <property type="entry name" value="RuBisCO"/>
    <property type="match status" value="1"/>
</dbReference>
<dbReference type="SFLD" id="SFLDG00301">
    <property type="entry name" value="RuBisCO-like_proteins"/>
    <property type="match status" value="1"/>
</dbReference>
<dbReference type="SUPFAM" id="SSF51649">
    <property type="entry name" value="RuBisCo, C-terminal domain"/>
    <property type="match status" value="1"/>
</dbReference>
<dbReference type="SUPFAM" id="SSF54966">
    <property type="entry name" value="RuBisCO, large subunit, small (N-terminal) domain"/>
    <property type="match status" value="1"/>
</dbReference>
<dbReference type="PROSITE" id="PS00157">
    <property type="entry name" value="RUBISCO_LARGE"/>
    <property type="match status" value="1"/>
</dbReference>
<name>RBL2_RHOCB</name>
<keyword id="KW-0113">Calvin cycle</keyword>
<keyword id="KW-0120">Carbon dioxide fixation</keyword>
<keyword id="KW-0456">Lyase</keyword>
<keyword id="KW-0460">Magnesium</keyword>
<keyword id="KW-0479">Metal-binding</keyword>
<keyword id="KW-0503">Monooxygenase</keyword>
<keyword id="KW-0560">Oxidoreductase</keyword>
<keyword id="KW-0602">Photosynthesis</keyword>
<keyword id="KW-1185">Reference proteome</keyword>
<feature type="chain" id="PRO_0000410720" description="Ribulose bisphosphate carboxylase">
    <location>
        <begin position="1"/>
        <end position="458"/>
    </location>
</feature>
<feature type="active site" description="Proton acceptor" evidence="1">
    <location>
        <position position="166"/>
    </location>
</feature>
<feature type="active site" description="Proton acceptor" evidence="1">
    <location>
        <position position="287"/>
    </location>
</feature>
<feature type="binding site" description="in homodimeric partner" evidence="1">
    <location>
        <position position="111"/>
    </location>
    <ligand>
        <name>substrate</name>
    </ligand>
</feature>
<feature type="binding site" evidence="1">
    <location>
        <position position="168"/>
    </location>
    <ligand>
        <name>substrate</name>
    </ligand>
</feature>
<feature type="binding site" description="via carbamate group" evidence="1">
    <location>
        <position position="191"/>
    </location>
    <ligand>
        <name>Mg(2+)</name>
        <dbReference type="ChEBI" id="CHEBI:18420"/>
    </ligand>
</feature>
<feature type="binding site" evidence="1">
    <location>
        <position position="193"/>
    </location>
    <ligand>
        <name>Mg(2+)</name>
        <dbReference type="ChEBI" id="CHEBI:18420"/>
    </ligand>
</feature>
<feature type="binding site" evidence="1">
    <location>
        <position position="194"/>
    </location>
    <ligand>
        <name>Mg(2+)</name>
        <dbReference type="ChEBI" id="CHEBI:18420"/>
    </ligand>
</feature>
<feature type="binding site" evidence="1">
    <location>
        <position position="288"/>
    </location>
    <ligand>
        <name>substrate</name>
    </ligand>
</feature>
<feature type="binding site" evidence="1">
    <location>
        <position position="321"/>
    </location>
    <ligand>
        <name>substrate</name>
    </ligand>
</feature>
<feature type="binding site" evidence="1">
    <location>
        <position position="368"/>
    </location>
    <ligand>
        <name>substrate</name>
    </ligand>
</feature>
<feature type="site" description="Transition state stabilizer" evidence="1">
    <location>
        <position position="329"/>
    </location>
</feature>
<feature type="modified residue" description="N6-carboxylysine" evidence="1">
    <location>
        <position position="191"/>
    </location>
</feature>
<accession>D5AUD5</accession>